<comment type="function">
    <text evidence="1">Catalyzes the phosphorylation of pantothenate (Pan), the first step in CoA biosynthesis.</text>
</comment>
<comment type="catalytic activity">
    <reaction evidence="1">
        <text>(R)-pantothenate + ATP = (R)-4'-phosphopantothenate + ADP + H(+)</text>
        <dbReference type="Rhea" id="RHEA:16373"/>
        <dbReference type="ChEBI" id="CHEBI:10986"/>
        <dbReference type="ChEBI" id="CHEBI:15378"/>
        <dbReference type="ChEBI" id="CHEBI:29032"/>
        <dbReference type="ChEBI" id="CHEBI:30616"/>
        <dbReference type="ChEBI" id="CHEBI:456216"/>
        <dbReference type="EC" id="2.7.1.33"/>
    </reaction>
</comment>
<comment type="cofactor">
    <cofactor evidence="1">
        <name>NH4(+)</name>
        <dbReference type="ChEBI" id="CHEBI:28938"/>
    </cofactor>
    <cofactor evidence="1">
        <name>K(+)</name>
        <dbReference type="ChEBI" id="CHEBI:29103"/>
    </cofactor>
    <text evidence="1">A monovalent cation. Ammonium or potassium.</text>
</comment>
<comment type="pathway">
    <text evidence="1">Cofactor biosynthesis; coenzyme A biosynthesis; CoA from (R)-pantothenate: step 1/5.</text>
</comment>
<comment type="subunit">
    <text evidence="1">Homodimer.</text>
</comment>
<comment type="subcellular location">
    <subcellularLocation>
        <location evidence="1">Cytoplasm</location>
    </subcellularLocation>
</comment>
<comment type="similarity">
    <text evidence="1">Belongs to the type III pantothenate kinase family.</text>
</comment>
<name>COAX_TREPA</name>
<sequence length="273" mass="28472">MLLIDVGNSHVVFGIQGENGGRVCVRELFRLAPDARKTQDEYSLLIHALCERAGVGRASLRDAFISSVVPVLTKTIADAVAQISGVQPVVFGPWAYEHLPVRIPEPVRAEIGTDLVANAVAAYVHFRSACVVVDCGTALTFTAVDGTGLIQGVAIAPGLRTAVQSLHTGTAQLPLVPLALPDSVLGKDTTHAVQAGVVRGTLFVIRAMIAQCQKELGCRCAAVITGGLSRLFSSEVDFPPIDAQLTLSGLAHIARLVPTSLLPPATVSGSSGN</sequence>
<gene>
    <name evidence="1" type="primary">coaX</name>
    <name type="ordered locus">TP_0431</name>
</gene>
<organism>
    <name type="scientific">Treponema pallidum (strain Nichols)</name>
    <dbReference type="NCBI Taxonomy" id="243276"/>
    <lineage>
        <taxon>Bacteria</taxon>
        <taxon>Pseudomonadati</taxon>
        <taxon>Spirochaetota</taxon>
        <taxon>Spirochaetia</taxon>
        <taxon>Spirochaetales</taxon>
        <taxon>Treponemataceae</taxon>
        <taxon>Treponema</taxon>
    </lineage>
</organism>
<reference key="1">
    <citation type="journal article" date="1998" name="Science">
        <title>Complete genome sequence of Treponema pallidum, the syphilis spirochete.</title>
        <authorList>
            <person name="Fraser C.M."/>
            <person name="Norris S.J."/>
            <person name="Weinstock G.M."/>
            <person name="White O."/>
            <person name="Sutton G.G."/>
            <person name="Dodson R.J."/>
            <person name="Gwinn M.L."/>
            <person name="Hickey E.K."/>
            <person name="Clayton R.A."/>
            <person name="Ketchum K.A."/>
            <person name="Sodergren E."/>
            <person name="Hardham J.M."/>
            <person name="McLeod M.P."/>
            <person name="Salzberg S.L."/>
            <person name="Peterson J.D."/>
            <person name="Khalak H.G."/>
            <person name="Richardson D.L."/>
            <person name="Howell J.K."/>
            <person name="Chidambaram M."/>
            <person name="Utterback T.R."/>
            <person name="McDonald L.A."/>
            <person name="Artiach P."/>
            <person name="Bowman C."/>
            <person name="Cotton M.D."/>
            <person name="Fujii C."/>
            <person name="Garland S.A."/>
            <person name="Hatch B."/>
            <person name="Horst K."/>
            <person name="Roberts K.M."/>
            <person name="Sandusky M."/>
            <person name="Weidman J.F."/>
            <person name="Smith H.O."/>
            <person name="Venter J.C."/>
        </authorList>
    </citation>
    <scope>NUCLEOTIDE SEQUENCE [LARGE SCALE GENOMIC DNA]</scope>
    <source>
        <strain>Nichols</strain>
    </source>
</reference>
<evidence type="ECO:0000255" key="1">
    <source>
        <dbReference type="HAMAP-Rule" id="MF_01274"/>
    </source>
</evidence>
<protein>
    <recommendedName>
        <fullName evidence="1">Type III pantothenate kinase</fullName>
        <ecNumber evidence="1">2.7.1.33</ecNumber>
    </recommendedName>
    <alternativeName>
        <fullName evidence="1">PanK-III</fullName>
    </alternativeName>
    <alternativeName>
        <fullName evidence="1">Pantothenic acid kinase</fullName>
    </alternativeName>
</protein>
<proteinExistence type="inferred from homology"/>
<keyword id="KW-0067">ATP-binding</keyword>
<keyword id="KW-0173">Coenzyme A biosynthesis</keyword>
<keyword id="KW-0963">Cytoplasm</keyword>
<keyword id="KW-0418">Kinase</keyword>
<keyword id="KW-0479">Metal-binding</keyword>
<keyword id="KW-0547">Nucleotide-binding</keyword>
<keyword id="KW-0630">Potassium</keyword>
<keyword id="KW-1185">Reference proteome</keyword>
<keyword id="KW-0808">Transferase</keyword>
<accession>O83446</accession>
<feature type="chain" id="PRO_0000267602" description="Type III pantothenate kinase">
    <location>
        <begin position="1"/>
        <end position="273"/>
    </location>
</feature>
<feature type="active site" description="Proton acceptor" evidence="1">
    <location>
        <position position="114"/>
    </location>
</feature>
<feature type="binding site" evidence="1">
    <location>
        <begin position="5"/>
        <end position="12"/>
    </location>
    <ligand>
        <name>ATP</name>
        <dbReference type="ChEBI" id="CHEBI:30616"/>
    </ligand>
</feature>
<feature type="binding site" evidence="1">
    <location>
        <begin position="112"/>
        <end position="115"/>
    </location>
    <ligand>
        <name>substrate</name>
    </ligand>
</feature>
<feature type="binding site" evidence="1">
    <location>
        <position position="134"/>
    </location>
    <ligand>
        <name>K(+)</name>
        <dbReference type="ChEBI" id="CHEBI:29103"/>
    </ligand>
</feature>
<feature type="binding site" evidence="1">
    <location>
        <position position="137"/>
    </location>
    <ligand>
        <name>ATP</name>
        <dbReference type="ChEBI" id="CHEBI:30616"/>
    </ligand>
</feature>
<feature type="binding site" evidence="1">
    <location>
        <position position="189"/>
    </location>
    <ligand>
        <name>substrate</name>
    </ligand>
</feature>
<dbReference type="EC" id="2.7.1.33" evidence="1"/>
<dbReference type="EMBL" id="AE000520">
    <property type="protein sequence ID" value="AAC65417.1"/>
    <property type="molecule type" value="Genomic_DNA"/>
</dbReference>
<dbReference type="PIR" id="D71326">
    <property type="entry name" value="D71326"/>
</dbReference>
<dbReference type="RefSeq" id="WP_010881879.1">
    <property type="nucleotide sequence ID" value="NC_021490.2"/>
</dbReference>
<dbReference type="SMR" id="O83446"/>
<dbReference type="STRING" id="243276.TP_0431"/>
<dbReference type="EnsemblBacteria" id="AAC65417">
    <property type="protein sequence ID" value="AAC65417"/>
    <property type="gene ID" value="TP_0431"/>
</dbReference>
<dbReference type="KEGG" id="tpa:TP_0431"/>
<dbReference type="KEGG" id="tpw:TPANIC_0431"/>
<dbReference type="eggNOG" id="COG1521">
    <property type="taxonomic scope" value="Bacteria"/>
</dbReference>
<dbReference type="HOGENOM" id="CLU_066627_1_1_12"/>
<dbReference type="OrthoDB" id="9804707at2"/>
<dbReference type="UniPathway" id="UPA00241">
    <property type="reaction ID" value="UER00352"/>
</dbReference>
<dbReference type="Proteomes" id="UP000000811">
    <property type="component" value="Chromosome"/>
</dbReference>
<dbReference type="GO" id="GO:0005737">
    <property type="term" value="C:cytoplasm"/>
    <property type="evidence" value="ECO:0007669"/>
    <property type="project" value="UniProtKB-SubCell"/>
</dbReference>
<dbReference type="GO" id="GO:0005524">
    <property type="term" value="F:ATP binding"/>
    <property type="evidence" value="ECO:0007669"/>
    <property type="project" value="UniProtKB-UniRule"/>
</dbReference>
<dbReference type="GO" id="GO:0046872">
    <property type="term" value="F:metal ion binding"/>
    <property type="evidence" value="ECO:0007669"/>
    <property type="project" value="UniProtKB-KW"/>
</dbReference>
<dbReference type="GO" id="GO:0004594">
    <property type="term" value="F:pantothenate kinase activity"/>
    <property type="evidence" value="ECO:0007669"/>
    <property type="project" value="UniProtKB-UniRule"/>
</dbReference>
<dbReference type="GO" id="GO:0015937">
    <property type="term" value="P:coenzyme A biosynthetic process"/>
    <property type="evidence" value="ECO:0007669"/>
    <property type="project" value="UniProtKB-UniRule"/>
</dbReference>
<dbReference type="CDD" id="cd24015">
    <property type="entry name" value="ASKHA_NBD_PanK-III"/>
    <property type="match status" value="1"/>
</dbReference>
<dbReference type="Gene3D" id="3.30.420.40">
    <property type="match status" value="2"/>
</dbReference>
<dbReference type="HAMAP" id="MF_01274">
    <property type="entry name" value="Pantothen_kinase_3"/>
    <property type="match status" value="1"/>
</dbReference>
<dbReference type="InterPro" id="IPR043129">
    <property type="entry name" value="ATPase_NBD"/>
</dbReference>
<dbReference type="InterPro" id="IPR004619">
    <property type="entry name" value="Type_III_PanK"/>
</dbReference>
<dbReference type="NCBIfam" id="TIGR00671">
    <property type="entry name" value="baf"/>
    <property type="match status" value="1"/>
</dbReference>
<dbReference type="PANTHER" id="PTHR34265">
    <property type="entry name" value="TYPE III PANTOTHENATE KINASE"/>
    <property type="match status" value="1"/>
</dbReference>
<dbReference type="PANTHER" id="PTHR34265:SF1">
    <property type="entry name" value="TYPE III PANTOTHENATE KINASE"/>
    <property type="match status" value="1"/>
</dbReference>
<dbReference type="Pfam" id="PF03309">
    <property type="entry name" value="Pan_kinase"/>
    <property type="match status" value="1"/>
</dbReference>
<dbReference type="SUPFAM" id="SSF53067">
    <property type="entry name" value="Actin-like ATPase domain"/>
    <property type="match status" value="2"/>
</dbReference>